<feature type="propeptide" id="PRO_0000031287" evidence="1">
    <location>
        <begin position="1"/>
        <end position="2"/>
    </location>
</feature>
<feature type="chain" id="PRO_0000031288" description="Ribulose bisphosphate carboxylase large chain">
    <location>
        <begin position="3"/>
        <end position="475"/>
    </location>
</feature>
<feature type="active site" description="Proton acceptor" evidence="1">
    <location>
        <position position="175"/>
    </location>
</feature>
<feature type="active site" description="Proton acceptor" evidence="1">
    <location>
        <position position="294"/>
    </location>
</feature>
<feature type="binding site" description="in homodimeric partner" evidence="1">
    <location>
        <position position="123"/>
    </location>
    <ligand>
        <name>substrate</name>
    </ligand>
</feature>
<feature type="binding site" evidence="1">
    <location>
        <position position="173"/>
    </location>
    <ligand>
        <name>substrate</name>
    </ligand>
</feature>
<feature type="binding site" evidence="1">
    <location>
        <position position="177"/>
    </location>
    <ligand>
        <name>substrate</name>
    </ligand>
</feature>
<feature type="binding site" description="via carbamate group" evidence="1">
    <location>
        <position position="201"/>
    </location>
    <ligand>
        <name>Mg(2+)</name>
        <dbReference type="ChEBI" id="CHEBI:18420"/>
    </ligand>
</feature>
<feature type="binding site" evidence="1">
    <location>
        <position position="203"/>
    </location>
    <ligand>
        <name>Mg(2+)</name>
        <dbReference type="ChEBI" id="CHEBI:18420"/>
    </ligand>
</feature>
<feature type="binding site" evidence="1">
    <location>
        <position position="204"/>
    </location>
    <ligand>
        <name>Mg(2+)</name>
        <dbReference type="ChEBI" id="CHEBI:18420"/>
    </ligand>
</feature>
<feature type="binding site" evidence="1">
    <location>
        <position position="295"/>
    </location>
    <ligand>
        <name>substrate</name>
    </ligand>
</feature>
<feature type="binding site" evidence="1">
    <location>
        <position position="327"/>
    </location>
    <ligand>
        <name>substrate</name>
    </ligand>
</feature>
<feature type="binding site" evidence="1">
    <location>
        <position position="379"/>
    </location>
    <ligand>
        <name>substrate</name>
    </ligand>
</feature>
<feature type="site" description="Transition state stabilizer" evidence="1">
    <location>
        <position position="334"/>
    </location>
</feature>
<feature type="modified residue" description="N-acetylproline" evidence="1">
    <location>
        <position position="3"/>
    </location>
</feature>
<feature type="modified residue" description="N6,N6,N6-trimethyllysine" evidence="1">
    <location>
        <position position="14"/>
    </location>
</feature>
<feature type="modified residue" description="N6-carboxylysine" evidence="1">
    <location>
        <position position="201"/>
    </location>
</feature>
<feature type="disulfide bond" description="Interchain; in linked form" evidence="1">
    <location>
        <position position="247"/>
    </location>
</feature>
<evidence type="ECO:0000255" key="1">
    <source>
        <dbReference type="HAMAP-Rule" id="MF_01338"/>
    </source>
</evidence>
<dbReference type="EC" id="4.1.1.39" evidence="1"/>
<dbReference type="EMBL" id="M58393">
    <property type="protein sequence ID" value="AAA82696.1"/>
    <property type="molecule type" value="Genomic_DNA"/>
</dbReference>
<dbReference type="SMR" id="P30732"/>
<dbReference type="GO" id="GO:0009507">
    <property type="term" value="C:chloroplast"/>
    <property type="evidence" value="ECO:0007669"/>
    <property type="project" value="UniProtKB-SubCell"/>
</dbReference>
<dbReference type="GO" id="GO:0000287">
    <property type="term" value="F:magnesium ion binding"/>
    <property type="evidence" value="ECO:0007669"/>
    <property type="project" value="UniProtKB-UniRule"/>
</dbReference>
<dbReference type="GO" id="GO:0004497">
    <property type="term" value="F:monooxygenase activity"/>
    <property type="evidence" value="ECO:0007669"/>
    <property type="project" value="UniProtKB-KW"/>
</dbReference>
<dbReference type="GO" id="GO:0016984">
    <property type="term" value="F:ribulose-bisphosphate carboxylase activity"/>
    <property type="evidence" value="ECO:0007669"/>
    <property type="project" value="UniProtKB-UniRule"/>
</dbReference>
<dbReference type="GO" id="GO:0009853">
    <property type="term" value="P:photorespiration"/>
    <property type="evidence" value="ECO:0007669"/>
    <property type="project" value="UniProtKB-KW"/>
</dbReference>
<dbReference type="GO" id="GO:0019253">
    <property type="term" value="P:reductive pentose-phosphate cycle"/>
    <property type="evidence" value="ECO:0007669"/>
    <property type="project" value="UniProtKB-UniRule"/>
</dbReference>
<dbReference type="CDD" id="cd08212">
    <property type="entry name" value="RuBisCO_large_I"/>
    <property type="match status" value="1"/>
</dbReference>
<dbReference type="FunFam" id="3.20.20.110:FF:000001">
    <property type="entry name" value="Ribulose bisphosphate carboxylase large chain"/>
    <property type="match status" value="1"/>
</dbReference>
<dbReference type="FunFam" id="3.30.70.150:FF:000001">
    <property type="entry name" value="Ribulose bisphosphate carboxylase large chain"/>
    <property type="match status" value="1"/>
</dbReference>
<dbReference type="Gene3D" id="3.20.20.110">
    <property type="entry name" value="Ribulose bisphosphate carboxylase, large subunit, C-terminal domain"/>
    <property type="match status" value="1"/>
</dbReference>
<dbReference type="Gene3D" id="3.30.70.150">
    <property type="entry name" value="RuBisCO large subunit, N-terminal domain"/>
    <property type="match status" value="1"/>
</dbReference>
<dbReference type="HAMAP" id="MF_01338">
    <property type="entry name" value="RuBisCO_L_type1"/>
    <property type="match status" value="1"/>
</dbReference>
<dbReference type="InterPro" id="IPR033966">
    <property type="entry name" value="RuBisCO"/>
</dbReference>
<dbReference type="InterPro" id="IPR020878">
    <property type="entry name" value="RuBisCo_large_chain_AS"/>
</dbReference>
<dbReference type="InterPro" id="IPR000685">
    <property type="entry name" value="RuBisCO_lsu_C"/>
</dbReference>
<dbReference type="InterPro" id="IPR036376">
    <property type="entry name" value="RuBisCO_lsu_C_sf"/>
</dbReference>
<dbReference type="InterPro" id="IPR017443">
    <property type="entry name" value="RuBisCO_lsu_fd_N"/>
</dbReference>
<dbReference type="InterPro" id="IPR036422">
    <property type="entry name" value="RuBisCO_lsu_N_sf"/>
</dbReference>
<dbReference type="InterPro" id="IPR020888">
    <property type="entry name" value="RuBisCO_lsuI"/>
</dbReference>
<dbReference type="NCBIfam" id="NF003252">
    <property type="entry name" value="PRK04208.1"/>
    <property type="match status" value="1"/>
</dbReference>
<dbReference type="PANTHER" id="PTHR42704">
    <property type="entry name" value="RIBULOSE BISPHOSPHATE CARBOXYLASE"/>
    <property type="match status" value="1"/>
</dbReference>
<dbReference type="PANTHER" id="PTHR42704:SF15">
    <property type="entry name" value="RIBULOSE BISPHOSPHATE CARBOXYLASE LARGE CHAIN"/>
    <property type="match status" value="1"/>
</dbReference>
<dbReference type="Pfam" id="PF00016">
    <property type="entry name" value="RuBisCO_large"/>
    <property type="match status" value="1"/>
</dbReference>
<dbReference type="Pfam" id="PF02788">
    <property type="entry name" value="RuBisCO_large_N"/>
    <property type="match status" value="1"/>
</dbReference>
<dbReference type="SFLD" id="SFLDG01052">
    <property type="entry name" value="RuBisCO"/>
    <property type="match status" value="1"/>
</dbReference>
<dbReference type="SFLD" id="SFLDS00014">
    <property type="entry name" value="RuBisCO"/>
    <property type="match status" value="1"/>
</dbReference>
<dbReference type="SFLD" id="SFLDG00301">
    <property type="entry name" value="RuBisCO-like_proteins"/>
    <property type="match status" value="1"/>
</dbReference>
<dbReference type="SUPFAM" id="SSF51649">
    <property type="entry name" value="RuBisCo, C-terminal domain"/>
    <property type="match status" value="1"/>
</dbReference>
<dbReference type="SUPFAM" id="SSF54966">
    <property type="entry name" value="RuBisCO, large subunit, small (N-terminal) domain"/>
    <property type="match status" value="1"/>
</dbReference>
<dbReference type="PROSITE" id="PS00157">
    <property type="entry name" value="RUBISCO_LARGE"/>
    <property type="match status" value="1"/>
</dbReference>
<gene>
    <name evidence="1" type="primary">rbcL</name>
</gene>
<sequence>MSPKTETKASVGFKAGVKEYKLTYYTPEYETKDTDILAAFRVTPQPGVPPEEAGAAVAAESSTGTWTTVWTDGLTSLDRYKGRCYHIEPVPGEESQFIAYVAYPLDLFEEGSVTNMFTSIVGNVFGFKALRALRLEDLRIPTAYVKTFQGPPHGIQVERDKLNKYGRPLLGCTIKPKLGLSAKNYGRAVYECLRGGLDFTKDDENVNSQPFMRWRDRFLFCAEAIYKAQAETGEIKGHYLNATAGTCEEMMKRAIFARELGVPIVMHDYLTGGFTANTTLAHYCRDNGLLLHIHRAMHAVIDRQKNHGIHFRVLAKALRMSGGDHIHAGTVVGKLEGERDITLGFVDLLRDDFIEKDRSRGIYFTQDWVSLPGVLPVASGGIHVWHMPALTEIFGDDSVLQFGGGTLGHPWGNAPGAVANRVALEACVQARNEGRDLASQGNEIIREASKWSPELAAACEVWKEIKFEFKAVDTL</sequence>
<accession>P30732</accession>
<comment type="function">
    <text evidence="1">RuBisCO catalyzes two reactions: the carboxylation of D-ribulose 1,5-bisphosphate, the primary event in carbon dioxide fixation, as well as the oxidative fragmentation of the pentose substrate in the photorespiration process. Both reactions occur simultaneously and in competition at the same active site.</text>
</comment>
<comment type="catalytic activity">
    <reaction evidence="1">
        <text>2 (2R)-3-phosphoglycerate + 2 H(+) = D-ribulose 1,5-bisphosphate + CO2 + H2O</text>
        <dbReference type="Rhea" id="RHEA:23124"/>
        <dbReference type="ChEBI" id="CHEBI:15377"/>
        <dbReference type="ChEBI" id="CHEBI:15378"/>
        <dbReference type="ChEBI" id="CHEBI:16526"/>
        <dbReference type="ChEBI" id="CHEBI:57870"/>
        <dbReference type="ChEBI" id="CHEBI:58272"/>
        <dbReference type="EC" id="4.1.1.39"/>
    </reaction>
</comment>
<comment type="catalytic activity">
    <reaction evidence="1">
        <text>D-ribulose 1,5-bisphosphate + O2 = 2-phosphoglycolate + (2R)-3-phosphoglycerate + 2 H(+)</text>
        <dbReference type="Rhea" id="RHEA:36631"/>
        <dbReference type="ChEBI" id="CHEBI:15378"/>
        <dbReference type="ChEBI" id="CHEBI:15379"/>
        <dbReference type="ChEBI" id="CHEBI:57870"/>
        <dbReference type="ChEBI" id="CHEBI:58033"/>
        <dbReference type="ChEBI" id="CHEBI:58272"/>
    </reaction>
</comment>
<comment type="cofactor">
    <cofactor evidence="1">
        <name>Mg(2+)</name>
        <dbReference type="ChEBI" id="CHEBI:18420"/>
    </cofactor>
    <text evidence="1">Binds 1 Mg(2+) ion per subunit.</text>
</comment>
<comment type="subunit">
    <text evidence="1">Heterohexadecamer of 8 large chains and 8 small chains; disulfide-linked. The disulfide link is formed within the large subunit homodimers.</text>
</comment>
<comment type="subcellular location">
    <subcellularLocation>
        <location>Plastid</location>
        <location>Chloroplast</location>
    </subcellularLocation>
</comment>
<comment type="PTM">
    <text evidence="1">The disulfide bond which can form in the large chain dimeric partners within the hexadecamer appears to be associated with oxidative stress and protein turnover.</text>
</comment>
<comment type="miscellaneous">
    <text evidence="1">The basic functional RuBisCO is composed of a large chain homodimer in a 'head-to-tail' conformation. In form I RuBisCO this homodimer is arranged in a barrel-like tetramer with the small subunits forming a tetrameric 'cap' on each end of the 'barrel'.</text>
</comment>
<comment type="similarity">
    <text evidence="1">Belongs to the RuBisCO large chain family. Type I subfamily.</text>
</comment>
<keyword id="KW-0007">Acetylation</keyword>
<keyword id="KW-0113">Calvin cycle</keyword>
<keyword id="KW-0120">Carbon dioxide fixation</keyword>
<keyword id="KW-0150">Chloroplast</keyword>
<keyword id="KW-1015">Disulfide bond</keyword>
<keyword id="KW-0456">Lyase</keyword>
<keyword id="KW-0460">Magnesium</keyword>
<keyword id="KW-0479">Metal-binding</keyword>
<keyword id="KW-0488">Methylation</keyword>
<keyword id="KW-0503">Monooxygenase</keyword>
<keyword id="KW-0560">Oxidoreductase</keyword>
<keyword id="KW-0601">Photorespiration</keyword>
<keyword id="KW-0602">Photosynthesis</keyword>
<keyword id="KW-0934">Plastid</keyword>
<geneLocation type="chloroplast"/>
<protein>
    <recommendedName>
        <fullName evidence="1">Ribulose bisphosphate carboxylase large chain</fullName>
        <shortName evidence="1">RuBisCO large subunit</shortName>
        <ecNumber evidence="1">4.1.1.39</ecNumber>
    </recommendedName>
</protein>
<reference key="1">
    <citation type="journal article" date="1992" name="Proc. Natl. Acad. Sci. U.S.A.">
        <title>Extensive variation in evolutionary rate of rbcL gene sequences among seed plants.</title>
        <authorList>
            <person name="Bousquet J."/>
            <person name="Strauss S.H."/>
            <person name="Doerksen A.H."/>
            <person name="Price R.A."/>
        </authorList>
    </citation>
    <scope>NUCLEOTIDE SEQUENCE [GENOMIC DNA]</scope>
</reference>
<proteinExistence type="inferred from homology"/>
<organism>
    <name type="scientific">Magnolia acuminata</name>
    <name type="common">Cucumber tree</name>
    <name type="synonym">Magnolia virginiana var. acuminata</name>
    <dbReference type="NCBI Taxonomy" id="3404"/>
    <lineage>
        <taxon>Eukaryota</taxon>
        <taxon>Viridiplantae</taxon>
        <taxon>Streptophyta</taxon>
        <taxon>Embryophyta</taxon>
        <taxon>Tracheophyta</taxon>
        <taxon>Spermatophyta</taxon>
        <taxon>Magnoliopsida</taxon>
        <taxon>Magnoliidae</taxon>
        <taxon>Magnoliales</taxon>
        <taxon>Magnoliaceae</taxon>
        <taxon>Magnolia</taxon>
    </lineage>
</organism>
<name>RBL_MAGAC</name>